<accession>P0DRA3</accession>
<proteinExistence type="evidence at protein level"/>
<protein>
    <recommendedName>
        <fullName evidence="5">VESP-VB1</fullName>
    </recommendedName>
</protein>
<reference key="1">
    <citation type="journal article" date="2008" name="Peptides">
        <title>Antimicrobial peptides from the venoms of Vespa bicolor Fabricius.</title>
        <authorList>
            <person name="Chen W."/>
            <person name="Yang X."/>
            <person name="Yang X."/>
            <person name="Zhai L."/>
            <person name="Lu Z."/>
            <person name="Liu J."/>
            <person name="Yu H."/>
        </authorList>
    </citation>
    <scope>NUCLEOTIDE SEQUENCE [MRNA]</scope>
    <scope>PROTEIN SEQUENCE OF 50-62</scope>
    <scope>FUNCTION</scope>
    <scope>SUBCELLULAR LOCATION</scope>
    <scope>AMIDATION AT LEU-62</scope>
    <scope>MASS SPECTROMETRY</scope>
    <source>
        <tissue>Venom</tissue>
        <tissue>Venom gland</tissue>
    </source>
</reference>
<comment type="function">
    <text evidence="1 2 4">Antimicrobial peptide. Shows activity against both Gram-positive (S.aureus MIC=1.0-3.75 ug/ml) and -negative (E.coli MIC=7.5-15 ug/ml) bacteria, as well against fungi (C.albicans MIC=30 ug/ml). Also promotes important mast cell degranulation. Shows little hemolytic activity on rabbit and human erythrocytes (PubMed:18723059). Its mast cell degranulation activity may be related to the activation of G-protein coupled receptors in mast cells as well as interaction with other proteins located in cell endosomal membranes in the mast cells (By similarity).</text>
</comment>
<comment type="subcellular location">
    <subcellularLocation>
        <location evidence="4">Secreted</location>
    </subcellularLocation>
</comment>
<comment type="tissue specificity">
    <text evidence="7">Expressed by the venom gland.</text>
</comment>
<comment type="mass spectrometry" mass="1420.6" method="FAB" evidence="4"/>
<comment type="similarity">
    <text evidence="6">Belongs to the MCD family. Mastoparan subfamily.</text>
</comment>
<feature type="signal peptide" evidence="3">
    <location>
        <begin position="1"/>
        <end position="23"/>
    </location>
</feature>
<feature type="propeptide" id="PRO_0000458804" evidence="7">
    <location>
        <begin position="24"/>
        <end position="49"/>
    </location>
</feature>
<feature type="peptide" id="PRO_0000458805" description="VESP-VB1" evidence="4">
    <location>
        <begin position="50"/>
        <end position="62"/>
    </location>
</feature>
<feature type="repeat" description="AXPX 1" evidence="7">
    <location>
        <begin position="23"/>
        <end position="26"/>
    </location>
</feature>
<feature type="repeat" description="AXPX 2" evidence="7">
    <location>
        <begin position="27"/>
        <end position="30"/>
    </location>
</feature>
<feature type="repeat" description="AXPX 3" evidence="7">
    <location>
        <begin position="31"/>
        <end position="34"/>
    </location>
</feature>
<feature type="repeat" description="AXPX 4" evidence="7">
    <location>
        <begin position="35"/>
        <end position="38"/>
    </location>
</feature>
<feature type="repeat" description="AXPX 5" evidence="7">
    <location>
        <begin position="39"/>
        <end position="42"/>
    </location>
</feature>
<feature type="repeat" description="AXPX 6" evidence="7">
    <location>
        <begin position="43"/>
        <end position="46"/>
    </location>
</feature>
<feature type="repeat" description="AXPX 7" evidence="7">
    <location>
        <begin position="47"/>
        <end position="50"/>
    </location>
</feature>
<feature type="modified residue" description="Leucine amide" evidence="4">
    <location>
        <position position="62"/>
    </location>
</feature>
<organism>
    <name type="scientific">Vespa bicolor</name>
    <name type="common">Black shield wasp</name>
    <dbReference type="NCBI Taxonomy" id="619325"/>
    <lineage>
        <taxon>Eukaryota</taxon>
        <taxon>Metazoa</taxon>
        <taxon>Ecdysozoa</taxon>
        <taxon>Arthropoda</taxon>
        <taxon>Hexapoda</taxon>
        <taxon>Insecta</taxon>
        <taxon>Pterygota</taxon>
        <taxon>Neoptera</taxon>
        <taxon>Endopterygota</taxon>
        <taxon>Hymenoptera</taxon>
        <taxon>Apocrita</taxon>
        <taxon>Aculeata</taxon>
        <taxon>Vespoidea</taxon>
        <taxon>Vespidae</taxon>
        <taxon>Vespinae</taxon>
        <taxon>Vespa</taxon>
    </lineage>
</organism>
<keyword id="KW-0027">Amidation</keyword>
<keyword id="KW-0044">Antibiotic</keyword>
<keyword id="KW-0929">Antimicrobial</keyword>
<keyword id="KW-0903">Direct protein sequencing</keyword>
<keyword id="KW-0295">Fungicide</keyword>
<keyword id="KW-1213">G-protein coupled receptor impairing toxin</keyword>
<keyword id="KW-0391">Immunity</keyword>
<keyword id="KW-0399">Innate immunity</keyword>
<keyword id="KW-0467">Mast cell degranulation</keyword>
<keyword id="KW-0677">Repeat</keyword>
<keyword id="KW-0964">Secreted</keyword>
<keyword id="KW-0732">Signal</keyword>
<keyword id="KW-0800">Toxin</keyword>
<name>VESP1_VESBI</name>
<dbReference type="GO" id="GO:0005576">
    <property type="term" value="C:extracellular region"/>
    <property type="evidence" value="ECO:0007669"/>
    <property type="project" value="UniProtKB-SubCell"/>
</dbReference>
<dbReference type="GO" id="GO:0090729">
    <property type="term" value="F:toxin activity"/>
    <property type="evidence" value="ECO:0007669"/>
    <property type="project" value="UniProtKB-KW"/>
</dbReference>
<dbReference type="GO" id="GO:0042742">
    <property type="term" value="P:defense response to bacterium"/>
    <property type="evidence" value="ECO:0007669"/>
    <property type="project" value="UniProtKB-KW"/>
</dbReference>
<dbReference type="GO" id="GO:0050832">
    <property type="term" value="P:defense response to fungus"/>
    <property type="evidence" value="ECO:0007669"/>
    <property type="project" value="UniProtKB-KW"/>
</dbReference>
<dbReference type="GO" id="GO:0045087">
    <property type="term" value="P:innate immune response"/>
    <property type="evidence" value="ECO:0007669"/>
    <property type="project" value="UniProtKB-KW"/>
</dbReference>
<dbReference type="GO" id="GO:0031640">
    <property type="term" value="P:killing of cells of another organism"/>
    <property type="evidence" value="ECO:0007669"/>
    <property type="project" value="UniProtKB-KW"/>
</dbReference>
<sequence length="65" mass="6627">MKMSILFLFALIASLACLQLTFAAPAASPLANPGASPEAAPLADPLADPFMPIIGRLMSGSLGKK</sequence>
<evidence type="ECO:0000250" key="1">
    <source>
        <dbReference type="UniProtKB" id="P01514"/>
    </source>
</evidence>
<evidence type="ECO:0000250" key="2">
    <source>
        <dbReference type="UniProtKB" id="P84914"/>
    </source>
</evidence>
<evidence type="ECO:0000255" key="3"/>
<evidence type="ECO:0000269" key="4">
    <source>
    </source>
</evidence>
<evidence type="ECO:0000303" key="5">
    <source>
    </source>
</evidence>
<evidence type="ECO:0000305" key="6"/>
<evidence type="ECO:0000305" key="7">
    <source>
    </source>
</evidence>